<reference key="1">
    <citation type="journal article" date="2008" name="PLoS Genet.">
        <title>Genomic islands in the pathogenic filamentous fungus Aspergillus fumigatus.</title>
        <authorList>
            <person name="Fedorova N.D."/>
            <person name="Khaldi N."/>
            <person name="Joardar V.S."/>
            <person name="Maiti R."/>
            <person name="Amedeo P."/>
            <person name="Anderson M.J."/>
            <person name="Crabtree J."/>
            <person name="Silva J.C."/>
            <person name="Badger J.H."/>
            <person name="Albarraq A."/>
            <person name="Angiuoli S."/>
            <person name="Bussey H."/>
            <person name="Bowyer P."/>
            <person name="Cotty P.J."/>
            <person name="Dyer P.S."/>
            <person name="Egan A."/>
            <person name="Galens K."/>
            <person name="Fraser-Liggett C.M."/>
            <person name="Haas B.J."/>
            <person name="Inman J.M."/>
            <person name="Kent R."/>
            <person name="Lemieux S."/>
            <person name="Malavazi I."/>
            <person name="Orvis J."/>
            <person name="Roemer T."/>
            <person name="Ronning C.M."/>
            <person name="Sundaram J.P."/>
            <person name="Sutton G."/>
            <person name="Turner G."/>
            <person name="Venter J.C."/>
            <person name="White O.R."/>
            <person name="Whitty B.R."/>
            <person name="Youngman P."/>
            <person name="Wolfe K.H."/>
            <person name="Goldman G.H."/>
            <person name="Wortman J.R."/>
            <person name="Jiang B."/>
            <person name="Denning D.W."/>
            <person name="Nierman W.C."/>
        </authorList>
    </citation>
    <scope>NUCLEOTIDE SEQUENCE [LARGE SCALE GENOMIC DNA]</scope>
    <source>
        <strain>ATCC 1007 / CBS 513.65 / DSM 816 / NCTC 3887 / NRRL 1 / QM 1276 / 107</strain>
    </source>
</reference>
<accession>A1CH27</accession>
<organism>
    <name type="scientific">Aspergillus clavatus (strain ATCC 1007 / CBS 513.65 / DSM 816 / NCTC 3887 / NRRL 1 / QM 1276 / 107)</name>
    <dbReference type="NCBI Taxonomy" id="344612"/>
    <lineage>
        <taxon>Eukaryota</taxon>
        <taxon>Fungi</taxon>
        <taxon>Dikarya</taxon>
        <taxon>Ascomycota</taxon>
        <taxon>Pezizomycotina</taxon>
        <taxon>Eurotiomycetes</taxon>
        <taxon>Eurotiomycetidae</taxon>
        <taxon>Eurotiales</taxon>
        <taxon>Aspergillaceae</taxon>
        <taxon>Aspergillus</taxon>
        <taxon>Aspergillus subgen. Fumigati</taxon>
    </lineage>
</organism>
<evidence type="ECO:0000250" key="1"/>
<evidence type="ECO:0000256" key="2">
    <source>
        <dbReference type="SAM" id="MobiDB-lite"/>
    </source>
</evidence>
<evidence type="ECO:0000305" key="3"/>
<dbReference type="EMBL" id="DS027054">
    <property type="protein sequence ID" value="EAW10182.1"/>
    <property type="molecule type" value="Genomic_DNA"/>
</dbReference>
<dbReference type="RefSeq" id="XP_001271608.1">
    <property type="nucleotide sequence ID" value="XM_001271607.1"/>
</dbReference>
<dbReference type="SMR" id="A1CH27"/>
<dbReference type="STRING" id="344612.A1CH27"/>
<dbReference type="EnsemblFungi" id="EAW10182">
    <property type="protein sequence ID" value="EAW10182"/>
    <property type="gene ID" value="ACLA_046480"/>
</dbReference>
<dbReference type="GeneID" id="4704315"/>
<dbReference type="KEGG" id="act:ACLA_046480"/>
<dbReference type="VEuPathDB" id="FungiDB:ACLA_046480"/>
<dbReference type="eggNOG" id="ENOG502RNK4">
    <property type="taxonomic scope" value="Eukaryota"/>
</dbReference>
<dbReference type="HOGENOM" id="CLU_033658_0_0_1"/>
<dbReference type="OMA" id="DYTPHFL"/>
<dbReference type="OrthoDB" id="10061064at2759"/>
<dbReference type="Proteomes" id="UP000006701">
    <property type="component" value="Unassembled WGS sequence"/>
</dbReference>
<dbReference type="GO" id="GO:0005737">
    <property type="term" value="C:cytoplasm"/>
    <property type="evidence" value="ECO:0007669"/>
    <property type="project" value="UniProtKB-SubCell"/>
</dbReference>
<dbReference type="GO" id="GO:0031965">
    <property type="term" value="C:nuclear membrane"/>
    <property type="evidence" value="ECO:0007669"/>
    <property type="project" value="TreeGrafter"/>
</dbReference>
<dbReference type="GO" id="GO:0070628">
    <property type="term" value="F:proteasome binding"/>
    <property type="evidence" value="ECO:0007669"/>
    <property type="project" value="TreeGrafter"/>
</dbReference>
<dbReference type="GO" id="GO:0071630">
    <property type="term" value="P:nuclear protein quality control by the ubiquitin-proteasome system"/>
    <property type="evidence" value="ECO:0007669"/>
    <property type="project" value="InterPro"/>
</dbReference>
<dbReference type="GO" id="GO:0031144">
    <property type="term" value="P:proteasome localization"/>
    <property type="evidence" value="ECO:0007669"/>
    <property type="project" value="InterPro"/>
</dbReference>
<dbReference type="GO" id="GO:0015031">
    <property type="term" value="P:protein transport"/>
    <property type="evidence" value="ECO:0007669"/>
    <property type="project" value="UniProtKB-KW"/>
</dbReference>
<dbReference type="FunFam" id="1.20.58.1590:FF:000001">
    <property type="entry name" value="Tethering factor for nuclear proteasome STS1"/>
    <property type="match status" value="1"/>
</dbReference>
<dbReference type="Gene3D" id="1.20.58.1590">
    <property type="entry name" value="Tethering factor for nuclear proteasome Cut8/Sts1"/>
    <property type="match status" value="1"/>
</dbReference>
<dbReference type="InterPro" id="IPR013868">
    <property type="entry name" value="Cut8/Sts1_fam"/>
</dbReference>
<dbReference type="InterPro" id="IPR038422">
    <property type="entry name" value="Cut8/Sts1_sf"/>
</dbReference>
<dbReference type="PANTHER" id="PTHR28032">
    <property type="entry name" value="FI02826P"/>
    <property type="match status" value="1"/>
</dbReference>
<dbReference type="PANTHER" id="PTHR28032:SF1">
    <property type="entry name" value="FI02826P"/>
    <property type="match status" value="1"/>
</dbReference>
<dbReference type="Pfam" id="PF08559">
    <property type="entry name" value="Cut8"/>
    <property type="match status" value="1"/>
</dbReference>
<gene>
    <name type="primary">sts1</name>
    <name type="ORF">ACLA_046480</name>
</gene>
<comment type="function">
    <text evidence="1">Involved in ubiquitin-mediated protein degradation. Regulatory factor in the ubiquitin/proteasome pathway that controls the turnover of proteasome substrates. Targets proteasomes to the nucleus and facilitates the degradation of nuclear proteins (By similarity).</text>
</comment>
<comment type="subunit">
    <text evidence="1">Binds the proteasome.</text>
</comment>
<comment type="subcellular location">
    <subcellularLocation>
        <location evidence="1">Cytoplasm</location>
    </subcellularLocation>
    <subcellularLocation>
        <location evidence="1">Nucleus</location>
    </subcellularLocation>
</comment>
<comment type="similarity">
    <text evidence="3">Belongs to the cut8/STS1 family.</text>
</comment>
<feature type="chain" id="PRO_0000409395" description="Tethering factor for nuclear proteasome sts1">
    <location>
        <begin position="1"/>
        <end position="313"/>
    </location>
</feature>
<feature type="region of interest" description="Disordered" evidence="2">
    <location>
        <begin position="1"/>
        <end position="79"/>
    </location>
</feature>
<feature type="compositionally biased region" description="Polar residues" evidence="2">
    <location>
        <begin position="20"/>
        <end position="33"/>
    </location>
</feature>
<feature type="compositionally biased region" description="Basic and acidic residues" evidence="2">
    <location>
        <begin position="39"/>
        <end position="50"/>
    </location>
</feature>
<sequence length="313" mass="34309">MNSLVATPPVPPHFYEHSRFSSPHPMSNPIHTPSSRKRKADDDGNDHDGRMSASPTNSPAFTPRSLPTPRSFKRSRPNVFGRPLSLPRLLETLDTDALRGILRSMCERHPALADEVIHTSPRPSVTSALQVLRNYQTALQNSFPLGGNPESDYAYNRVRQPLGNLLDALSDFTPHFLPPNESQASVSLSYLDGATEIIHALPRWNSPQNNIERDSAYDEICKAWVLVIREAAKRGGGIQLQYGGWDQKLSKHNHNSGGRLQAAVNELGNSLGWMHGPDSQGYSSPAAGDLGSIRDQLLSGTYGLGTPVKVGPW</sequence>
<name>STS1_ASPCL</name>
<proteinExistence type="inferred from homology"/>
<protein>
    <recommendedName>
        <fullName>Tethering factor for nuclear proteasome sts1</fullName>
    </recommendedName>
</protein>
<keyword id="KW-0963">Cytoplasm</keyword>
<keyword id="KW-0539">Nucleus</keyword>
<keyword id="KW-0653">Protein transport</keyword>
<keyword id="KW-1185">Reference proteome</keyword>
<keyword id="KW-0813">Transport</keyword>